<gene>
    <name evidence="1" type="primary">panD</name>
    <name type="ordered locus">PTH_0222</name>
</gene>
<reference key="1">
    <citation type="journal article" date="2008" name="Genome Res.">
        <title>The genome of Pelotomaculum thermopropionicum reveals niche-associated evolution in anaerobic microbiota.</title>
        <authorList>
            <person name="Kosaka T."/>
            <person name="Kato S."/>
            <person name="Shimoyama T."/>
            <person name="Ishii S."/>
            <person name="Abe T."/>
            <person name="Watanabe K."/>
        </authorList>
    </citation>
    <scope>NUCLEOTIDE SEQUENCE [LARGE SCALE GENOMIC DNA]</scope>
    <source>
        <strain>DSM 13744 / JCM 10971 / SI</strain>
    </source>
</reference>
<sequence>MFLTMLKSKIHRATVTESNLNYMGSITIDEELMEAADILPNEKVQVVNNNNGARFETYVIKGPRGSGVICLNGAAARLVQPGDLVIIISYAIMDAGEARTYRPAVVMVDGRNKIVEVRQGEAHGPAGADTCP</sequence>
<proteinExistence type="inferred from homology"/>
<evidence type="ECO:0000255" key="1">
    <source>
        <dbReference type="HAMAP-Rule" id="MF_00446"/>
    </source>
</evidence>
<keyword id="KW-0068">Autocatalytic cleavage</keyword>
<keyword id="KW-0963">Cytoplasm</keyword>
<keyword id="KW-0210">Decarboxylase</keyword>
<keyword id="KW-0456">Lyase</keyword>
<keyword id="KW-0566">Pantothenate biosynthesis</keyword>
<keyword id="KW-0670">Pyruvate</keyword>
<keyword id="KW-1185">Reference proteome</keyword>
<keyword id="KW-0704">Schiff base</keyword>
<keyword id="KW-0865">Zymogen</keyword>
<name>PAND_PELTS</name>
<comment type="function">
    <text evidence="1">Catalyzes the pyruvoyl-dependent decarboxylation of aspartate to produce beta-alanine.</text>
</comment>
<comment type="catalytic activity">
    <reaction evidence="1">
        <text>L-aspartate + H(+) = beta-alanine + CO2</text>
        <dbReference type="Rhea" id="RHEA:19497"/>
        <dbReference type="ChEBI" id="CHEBI:15378"/>
        <dbReference type="ChEBI" id="CHEBI:16526"/>
        <dbReference type="ChEBI" id="CHEBI:29991"/>
        <dbReference type="ChEBI" id="CHEBI:57966"/>
        <dbReference type="EC" id="4.1.1.11"/>
    </reaction>
</comment>
<comment type="cofactor">
    <cofactor evidence="1">
        <name>pyruvate</name>
        <dbReference type="ChEBI" id="CHEBI:15361"/>
    </cofactor>
    <text evidence="1">Binds 1 pyruvoyl group covalently per subunit.</text>
</comment>
<comment type="pathway">
    <text evidence="1">Cofactor biosynthesis; (R)-pantothenate biosynthesis; beta-alanine from L-aspartate: step 1/1.</text>
</comment>
<comment type="subunit">
    <text evidence="1">Heterooctamer of four alpha and four beta subunits.</text>
</comment>
<comment type="subcellular location">
    <subcellularLocation>
        <location evidence="1">Cytoplasm</location>
    </subcellularLocation>
</comment>
<comment type="PTM">
    <text evidence="1">Is synthesized initially as an inactive proenzyme, which is activated by self-cleavage at a specific serine bond to produce a beta-subunit with a hydroxyl group at its C-terminus and an alpha-subunit with a pyruvoyl group at its N-terminus.</text>
</comment>
<comment type="similarity">
    <text evidence="1">Belongs to the PanD family.</text>
</comment>
<dbReference type="EC" id="4.1.1.11" evidence="1"/>
<dbReference type="EMBL" id="AP009389">
    <property type="protein sequence ID" value="BAF58403.1"/>
    <property type="molecule type" value="Genomic_DNA"/>
</dbReference>
<dbReference type="SMR" id="A5D5T6"/>
<dbReference type="STRING" id="370438.PTH_0222"/>
<dbReference type="KEGG" id="pth:PTH_0222"/>
<dbReference type="eggNOG" id="COG0853">
    <property type="taxonomic scope" value="Bacteria"/>
</dbReference>
<dbReference type="HOGENOM" id="CLU_115305_2_0_9"/>
<dbReference type="UniPathway" id="UPA00028">
    <property type="reaction ID" value="UER00002"/>
</dbReference>
<dbReference type="Proteomes" id="UP000006556">
    <property type="component" value="Chromosome"/>
</dbReference>
<dbReference type="GO" id="GO:0005829">
    <property type="term" value="C:cytosol"/>
    <property type="evidence" value="ECO:0007669"/>
    <property type="project" value="TreeGrafter"/>
</dbReference>
<dbReference type="GO" id="GO:0004068">
    <property type="term" value="F:aspartate 1-decarboxylase activity"/>
    <property type="evidence" value="ECO:0007669"/>
    <property type="project" value="UniProtKB-UniRule"/>
</dbReference>
<dbReference type="GO" id="GO:0006523">
    <property type="term" value="P:alanine biosynthetic process"/>
    <property type="evidence" value="ECO:0007669"/>
    <property type="project" value="InterPro"/>
</dbReference>
<dbReference type="GO" id="GO:0015940">
    <property type="term" value="P:pantothenate biosynthetic process"/>
    <property type="evidence" value="ECO:0007669"/>
    <property type="project" value="UniProtKB-UniRule"/>
</dbReference>
<dbReference type="CDD" id="cd06919">
    <property type="entry name" value="Asp_decarbox"/>
    <property type="match status" value="1"/>
</dbReference>
<dbReference type="Gene3D" id="2.40.40.20">
    <property type="match status" value="1"/>
</dbReference>
<dbReference type="HAMAP" id="MF_00446">
    <property type="entry name" value="PanD"/>
    <property type="match status" value="1"/>
</dbReference>
<dbReference type="InterPro" id="IPR009010">
    <property type="entry name" value="Asp_de-COase-like_dom_sf"/>
</dbReference>
<dbReference type="InterPro" id="IPR003190">
    <property type="entry name" value="Asp_decarbox"/>
</dbReference>
<dbReference type="NCBIfam" id="TIGR00223">
    <property type="entry name" value="panD"/>
    <property type="match status" value="1"/>
</dbReference>
<dbReference type="PANTHER" id="PTHR21012">
    <property type="entry name" value="ASPARTATE 1-DECARBOXYLASE"/>
    <property type="match status" value="1"/>
</dbReference>
<dbReference type="PANTHER" id="PTHR21012:SF0">
    <property type="entry name" value="ASPARTATE 1-DECARBOXYLASE"/>
    <property type="match status" value="1"/>
</dbReference>
<dbReference type="Pfam" id="PF02261">
    <property type="entry name" value="Asp_decarbox"/>
    <property type="match status" value="1"/>
</dbReference>
<dbReference type="PIRSF" id="PIRSF006246">
    <property type="entry name" value="Asp_decarbox"/>
    <property type="match status" value="1"/>
</dbReference>
<dbReference type="SUPFAM" id="SSF50692">
    <property type="entry name" value="ADC-like"/>
    <property type="match status" value="1"/>
</dbReference>
<organism>
    <name type="scientific">Pelotomaculum thermopropionicum (strain DSM 13744 / JCM 10971 / SI)</name>
    <dbReference type="NCBI Taxonomy" id="370438"/>
    <lineage>
        <taxon>Bacteria</taxon>
        <taxon>Bacillati</taxon>
        <taxon>Bacillota</taxon>
        <taxon>Clostridia</taxon>
        <taxon>Eubacteriales</taxon>
        <taxon>Desulfotomaculaceae</taxon>
        <taxon>Pelotomaculum</taxon>
    </lineage>
</organism>
<protein>
    <recommendedName>
        <fullName evidence="1">Aspartate 1-decarboxylase</fullName>
        <ecNumber evidence="1">4.1.1.11</ecNumber>
    </recommendedName>
    <alternativeName>
        <fullName evidence="1">Aspartate alpha-decarboxylase</fullName>
    </alternativeName>
    <component>
        <recommendedName>
            <fullName evidence="1">Aspartate 1-decarboxylase beta chain</fullName>
        </recommendedName>
    </component>
    <component>
        <recommendedName>
            <fullName evidence="1">Aspartate 1-decarboxylase alpha chain</fullName>
        </recommendedName>
    </component>
</protein>
<accession>A5D5T6</accession>
<feature type="chain" id="PRO_1000080928" description="Aspartate 1-decarboxylase beta chain" evidence="1">
    <location>
        <begin position="1"/>
        <end position="24"/>
    </location>
</feature>
<feature type="chain" id="PRO_1000080929" description="Aspartate 1-decarboxylase alpha chain" evidence="1">
    <location>
        <begin position="25"/>
        <end position="132"/>
    </location>
</feature>
<feature type="active site" description="Schiff-base intermediate with substrate; via pyruvic acid" evidence="1">
    <location>
        <position position="25"/>
    </location>
</feature>
<feature type="active site" description="Proton donor" evidence="1">
    <location>
        <position position="58"/>
    </location>
</feature>
<feature type="binding site" evidence="1">
    <location>
        <position position="57"/>
    </location>
    <ligand>
        <name>substrate</name>
    </ligand>
</feature>
<feature type="binding site" evidence="1">
    <location>
        <begin position="73"/>
        <end position="75"/>
    </location>
    <ligand>
        <name>substrate</name>
    </ligand>
</feature>
<feature type="modified residue" description="Pyruvic acid (Ser)" evidence="1">
    <location>
        <position position="25"/>
    </location>
</feature>